<dbReference type="EMBL" id="CP001108">
    <property type="protein sequence ID" value="ACF45935.1"/>
    <property type="molecule type" value="Genomic_DNA"/>
</dbReference>
<dbReference type="RefSeq" id="WP_012505472.1">
    <property type="nucleotide sequence ID" value="NC_011059.1"/>
</dbReference>
<dbReference type="SMR" id="B4S798"/>
<dbReference type="STRING" id="290512.Paes_0892"/>
<dbReference type="KEGG" id="paa:Paes_0892"/>
<dbReference type="eggNOG" id="COG0356">
    <property type="taxonomic scope" value="Bacteria"/>
</dbReference>
<dbReference type="HOGENOM" id="CLU_041018_2_5_10"/>
<dbReference type="Proteomes" id="UP000002725">
    <property type="component" value="Chromosome"/>
</dbReference>
<dbReference type="GO" id="GO:0005886">
    <property type="term" value="C:plasma membrane"/>
    <property type="evidence" value="ECO:0007669"/>
    <property type="project" value="UniProtKB-SubCell"/>
</dbReference>
<dbReference type="GO" id="GO:0045259">
    <property type="term" value="C:proton-transporting ATP synthase complex"/>
    <property type="evidence" value="ECO:0007669"/>
    <property type="project" value="UniProtKB-KW"/>
</dbReference>
<dbReference type="GO" id="GO:0046933">
    <property type="term" value="F:proton-transporting ATP synthase activity, rotational mechanism"/>
    <property type="evidence" value="ECO:0007669"/>
    <property type="project" value="UniProtKB-UniRule"/>
</dbReference>
<dbReference type="GO" id="GO:0042777">
    <property type="term" value="P:proton motive force-driven plasma membrane ATP synthesis"/>
    <property type="evidence" value="ECO:0007669"/>
    <property type="project" value="TreeGrafter"/>
</dbReference>
<dbReference type="CDD" id="cd00310">
    <property type="entry name" value="ATP-synt_Fo_a_6"/>
    <property type="match status" value="1"/>
</dbReference>
<dbReference type="Gene3D" id="1.20.120.220">
    <property type="entry name" value="ATP synthase, F0 complex, subunit A"/>
    <property type="match status" value="1"/>
</dbReference>
<dbReference type="HAMAP" id="MF_01393">
    <property type="entry name" value="ATP_synth_a_bact"/>
    <property type="match status" value="1"/>
</dbReference>
<dbReference type="InterPro" id="IPR017692">
    <property type="entry name" value="Alt_ATP_synth_F0_Asu"/>
</dbReference>
<dbReference type="InterPro" id="IPR045082">
    <property type="entry name" value="ATP_syn_F0_a_bact/chloroplast"/>
</dbReference>
<dbReference type="InterPro" id="IPR000568">
    <property type="entry name" value="ATP_synth_F0_asu"/>
</dbReference>
<dbReference type="InterPro" id="IPR023011">
    <property type="entry name" value="ATP_synth_F0_asu_AS"/>
</dbReference>
<dbReference type="InterPro" id="IPR035908">
    <property type="entry name" value="F0_ATP_A_sf"/>
</dbReference>
<dbReference type="NCBIfam" id="TIGR03306">
    <property type="entry name" value="altF1_A"/>
    <property type="match status" value="1"/>
</dbReference>
<dbReference type="NCBIfam" id="TIGR01131">
    <property type="entry name" value="ATP_synt_6_or_A"/>
    <property type="match status" value="1"/>
</dbReference>
<dbReference type="NCBIfam" id="NF004481">
    <property type="entry name" value="PRK05815.2-3"/>
    <property type="match status" value="1"/>
</dbReference>
<dbReference type="PANTHER" id="PTHR42823">
    <property type="entry name" value="ATP SYNTHASE SUBUNIT A, CHLOROPLASTIC"/>
    <property type="match status" value="1"/>
</dbReference>
<dbReference type="PANTHER" id="PTHR42823:SF3">
    <property type="entry name" value="ATP SYNTHASE SUBUNIT A, CHLOROPLASTIC"/>
    <property type="match status" value="1"/>
</dbReference>
<dbReference type="Pfam" id="PF00119">
    <property type="entry name" value="ATP-synt_A"/>
    <property type="match status" value="1"/>
</dbReference>
<dbReference type="PRINTS" id="PR00123">
    <property type="entry name" value="ATPASEA"/>
</dbReference>
<dbReference type="SUPFAM" id="SSF81336">
    <property type="entry name" value="F1F0 ATP synthase subunit A"/>
    <property type="match status" value="1"/>
</dbReference>
<dbReference type="PROSITE" id="PS00449">
    <property type="entry name" value="ATPASE_A"/>
    <property type="match status" value="1"/>
</dbReference>
<reference key="1">
    <citation type="submission" date="2008-06" db="EMBL/GenBank/DDBJ databases">
        <title>Complete sequence of chromosome of Prosthecochloris aestuarii DSM 271.</title>
        <authorList>
            <consortium name="US DOE Joint Genome Institute"/>
            <person name="Lucas S."/>
            <person name="Copeland A."/>
            <person name="Lapidus A."/>
            <person name="Glavina del Rio T."/>
            <person name="Dalin E."/>
            <person name="Tice H."/>
            <person name="Bruce D."/>
            <person name="Goodwin L."/>
            <person name="Pitluck S."/>
            <person name="Schmutz J."/>
            <person name="Larimer F."/>
            <person name="Land M."/>
            <person name="Hauser L."/>
            <person name="Kyrpides N."/>
            <person name="Anderson I."/>
            <person name="Liu Z."/>
            <person name="Li T."/>
            <person name="Zhao F."/>
            <person name="Overmann J."/>
            <person name="Bryant D.A."/>
            <person name="Richardson P."/>
        </authorList>
    </citation>
    <scope>NUCLEOTIDE SEQUENCE [LARGE SCALE GENOMIC DNA]</scope>
    <source>
        <strain>DSM 271 / SK 413</strain>
    </source>
</reference>
<feature type="chain" id="PRO_0000362386" description="ATP synthase subunit a 1">
    <location>
        <begin position="1"/>
        <end position="223"/>
    </location>
</feature>
<feature type="transmembrane region" description="Helical" evidence="1">
    <location>
        <begin position="20"/>
        <end position="40"/>
    </location>
</feature>
<feature type="transmembrane region" description="Helical" evidence="1">
    <location>
        <begin position="78"/>
        <end position="98"/>
    </location>
</feature>
<feature type="transmembrane region" description="Helical" evidence="1">
    <location>
        <begin position="107"/>
        <end position="127"/>
    </location>
</feature>
<feature type="transmembrane region" description="Helical" evidence="1">
    <location>
        <begin position="173"/>
        <end position="193"/>
    </location>
</feature>
<feature type="transmembrane region" description="Helical" evidence="1">
    <location>
        <begin position="194"/>
        <end position="214"/>
    </location>
</feature>
<keyword id="KW-0066">ATP synthesis</keyword>
<keyword id="KW-0997">Cell inner membrane</keyword>
<keyword id="KW-1003">Cell membrane</keyword>
<keyword id="KW-0138">CF(0)</keyword>
<keyword id="KW-0375">Hydrogen ion transport</keyword>
<keyword id="KW-0406">Ion transport</keyword>
<keyword id="KW-0472">Membrane</keyword>
<keyword id="KW-0812">Transmembrane</keyword>
<keyword id="KW-1133">Transmembrane helix</keyword>
<keyword id="KW-0813">Transport</keyword>
<protein>
    <recommendedName>
        <fullName evidence="1">ATP synthase subunit a 1</fullName>
    </recommendedName>
    <alternativeName>
        <fullName evidence="1">ATP synthase F0 sector subunit a 1</fullName>
    </alternativeName>
    <alternativeName>
        <fullName evidence="1">F-ATPase subunit 6 1</fullName>
    </alternativeName>
</protein>
<gene>
    <name evidence="1" type="primary">atpB1</name>
    <name type="ordered locus">Paes_0892</name>
</gene>
<name>ATP61_PROA2</name>
<comment type="function">
    <text evidence="1">Key component of the proton channel; it plays a direct role in the translocation of protons across the membrane.</text>
</comment>
<comment type="subunit">
    <text evidence="1">F-type ATPases have 2 components, CF(1) - the catalytic core - and CF(0) - the membrane proton channel. CF(1) has five subunits: alpha(3), beta(3), gamma(1), delta(1), epsilon(1). CF(0) has four main subunits: a, b, b' and c.</text>
</comment>
<comment type="subcellular location">
    <subcellularLocation>
        <location evidence="1">Cell inner membrane</location>
        <topology evidence="1">Multi-pass membrane protein</topology>
    </subcellularLocation>
</comment>
<comment type="similarity">
    <text evidence="1">Belongs to the ATPase A chain family.</text>
</comment>
<sequence>MHLSGDDVIVWQYGVVKLNQTIVMTWVIMVFLAGGSAFLTRRLSSGIRISRWQSFLEMIVTMAMQQIREIGLRQPEKYLSYLATLFLFVATAVLFTIIPGYEPPTGSLSTTAALALSVFVAVPLYGIERVGFGAYLKSYMKPTFIMLPFNIISEFSRTLALAVRLFGNMMSGVMIIGILLGIAPLFFPVLMSVLGLLTGMVQAYIFSMLATVYIAAATKSRDE</sequence>
<organism>
    <name type="scientific">Prosthecochloris aestuarii (strain DSM 271 / SK 413)</name>
    <dbReference type="NCBI Taxonomy" id="290512"/>
    <lineage>
        <taxon>Bacteria</taxon>
        <taxon>Pseudomonadati</taxon>
        <taxon>Chlorobiota</taxon>
        <taxon>Chlorobiia</taxon>
        <taxon>Chlorobiales</taxon>
        <taxon>Chlorobiaceae</taxon>
        <taxon>Prosthecochloris</taxon>
    </lineage>
</organism>
<proteinExistence type="inferred from homology"/>
<accession>B4S798</accession>
<evidence type="ECO:0000255" key="1">
    <source>
        <dbReference type="HAMAP-Rule" id="MF_01393"/>
    </source>
</evidence>